<reference key="1">
    <citation type="journal article" date="2006" name="Appl. Environ. Microbiol.">
        <title>Complete genome sequence of the marine, chemolithoautotrophic, ammonia-oxidizing bacterium Nitrosococcus oceani ATCC 19707.</title>
        <authorList>
            <person name="Klotz M.G."/>
            <person name="Arp D.J."/>
            <person name="Chain P.S.G."/>
            <person name="El-Sheikh A.F."/>
            <person name="Hauser L.J."/>
            <person name="Hommes N.G."/>
            <person name="Larimer F.W."/>
            <person name="Malfatti S.A."/>
            <person name="Norton J.M."/>
            <person name="Poret-Peterson A.T."/>
            <person name="Vergez L.M."/>
            <person name="Ward B.B."/>
        </authorList>
    </citation>
    <scope>NUCLEOTIDE SEQUENCE [LARGE SCALE GENOMIC DNA]</scope>
    <source>
        <strain>ATCC 19707 / BCRC 17464 / JCM 30415 / NCIMB 11848 / C-107</strain>
    </source>
</reference>
<proteinExistence type="inferred from homology"/>
<gene>
    <name evidence="1" type="primary">tsaD</name>
    <name type="synonym">gcp</name>
    <name type="ordered locus">Noc_0041</name>
</gene>
<comment type="function">
    <text evidence="1">Required for the formation of a threonylcarbamoyl group on adenosine at position 37 (t(6)A37) in tRNAs that read codons beginning with adenine. Is involved in the transfer of the threonylcarbamoyl moiety of threonylcarbamoyl-AMP (TC-AMP) to the N6 group of A37, together with TsaE and TsaB. TsaD likely plays a direct catalytic role in this reaction.</text>
</comment>
<comment type="catalytic activity">
    <reaction evidence="1">
        <text>L-threonylcarbamoyladenylate + adenosine(37) in tRNA = N(6)-L-threonylcarbamoyladenosine(37) in tRNA + AMP + H(+)</text>
        <dbReference type="Rhea" id="RHEA:37059"/>
        <dbReference type="Rhea" id="RHEA-COMP:10162"/>
        <dbReference type="Rhea" id="RHEA-COMP:10163"/>
        <dbReference type="ChEBI" id="CHEBI:15378"/>
        <dbReference type="ChEBI" id="CHEBI:73682"/>
        <dbReference type="ChEBI" id="CHEBI:74411"/>
        <dbReference type="ChEBI" id="CHEBI:74418"/>
        <dbReference type="ChEBI" id="CHEBI:456215"/>
        <dbReference type="EC" id="2.3.1.234"/>
    </reaction>
</comment>
<comment type="cofactor">
    <cofactor evidence="1">
        <name>Fe(2+)</name>
        <dbReference type="ChEBI" id="CHEBI:29033"/>
    </cofactor>
    <text evidence="1">Binds 1 Fe(2+) ion per subunit.</text>
</comment>
<comment type="subcellular location">
    <subcellularLocation>
        <location evidence="1">Cytoplasm</location>
    </subcellularLocation>
</comment>
<comment type="similarity">
    <text evidence="1">Belongs to the KAE1 / TsaD family.</text>
</comment>
<keyword id="KW-0012">Acyltransferase</keyword>
<keyword id="KW-0963">Cytoplasm</keyword>
<keyword id="KW-0408">Iron</keyword>
<keyword id="KW-0479">Metal-binding</keyword>
<keyword id="KW-1185">Reference proteome</keyword>
<keyword id="KW-0808">Transferase</keyword>
<keyword id="KW-0819">tRNA processing</keyword>
<organism>
    <name type="scientific">Nitrosococcus oceani (strain ATCC 19707 / BCRC 17464 / JCM 30415 / NCIMB 11848 / C-107)</name>
    <dbReference type="NCBI Taxonomy" id="323261"/>
    <lineage>
        <taxon>Bacteria</taxon>
        <taxon>Pseudomonadati</taxon>
        <taxon>Pseudomonadota</taxon>
        <taxon>Gammaproteobacteria</taxon>
        <taxon>Chromatiales</taxon>
        <taxon>Chromatiaceae</taxon>
        <taxon>Nitrosococcus</taxon>
    </lineage>
</organism>
<dbReference type="EC" id="2.3.1.234" evidence="1"/>
<dbReference type="EMBL" id="CP000127">
    <property type="protein sequence ID" value="ABA56583.1"/>
    <property type="molecule type" value="Genomic_DNA"/>
</dbReference>
<dbReference type="RefSeq" id="WP_002812606.1">
    <property type="nucleotide sequence ID" value="NC_007484.1"/>
</dbReference>
<dbReference type="SMR" id="Q3JF13"/>
<dbReference type="FunCoup" id="Q3JF13">
    <property type="interactions" value="543"/>
</dbReference>
<dbReference type="STRING" id="323261.Noc_0041"/>
<dbReference type="KEGG" id="noc:Noc_0041"/>
<dbReference type="eggNOG" id="COG0533">
    <property type="taxonomic scope" value="Bacteria"/>
</dbReference>
<dbReference type="HOGENOM" id="CLU_023208_0_0_6"/>
<dbReference type="InParanoid" id="Q3JF13"/>
<dbReference type="Proteomes" id="UP000006838">
    <property type="component" value="Chromosome"/>
</dbReference>
<dbReference type="GO" id="GO:0005737">
    <property type="term" value="C:cytoplasm"/>
    <property type="evidence" value="ECO:0007669"/>
    <property type="project" value="UniProtKB-SubCell"/>
</dbReference>
<dbReference type="GO" id="GO:0005506">
    <property type="term" value="F:iron ion binding"/>
    <property type="evidence" value="ECO:0007669"/>
    <property type="project" value="UniProtKB-UniRule"/>
</dbReference>
<dbReference type="GO" id="GO:0061711">
    <property type="term" value="F:N(6)-L-threonylcarbamoyladenine synthase activity"/>
    <property type="evidence" value="ECO:0007669"/>
    <property type="project" value="UniProtKB-EC"/>
</dbReference>
<dbReference type="GO" id="GO:0002949">
    <property type="term" value="P:tRNA threonylcarbamoyladenosine modification"/>
    <property type="evidence" value="ECO:0007669"/>
    <property type="project" value="UniProtKB-UniRule"/>
</dbReference>
<dbReference type="CDD" id="cd24133">
    <property type="entry name" value="ASKHA_NBD_TsaD_bac"/>
    <property type="match status" value="1"/>
</dbReference>
<dbReference type="FunFam" id="3.30.420.40:FF:000040">
    <property type="entry name" value="tRNA N6-adenosine threonylcarbamoyltransferase"/>
    <property type="match status" value="1"/>
</dbReference>
<dbReference type="Gene3D" id="3.30.420.40">
    <property type="match status" value="2"/>
</dbReference>
<dbReference type="HAMAP" id="MF_01445">
    <property type="entry name" value="TsaD"/>
    <property type="match status" value="1"/>
</dbReference>
<dbReference type="InterPro" id="IPR043129">
    <property type="entry name" value="ATPase_NBD"/>
</dbReference>
<dbReference type="InterPro" id="IPR000905">
    <property type="entry name" value="Gcp-like_dom"/>
</dbReference>
<dbReference type="InterPro" id="IPR017861">
    <property type="entry name" value="KAE1/TsaD"/>
</dbReference>
<dbReference type="InterPro" id="IPR017860">
    <property type="entry name" value="Peptidase_M22_CS"/>
</dbReference>
<dbReference type="InterPro" id="IPR022450">
    <property type="entry name" value="TsaD"/>
</dbReference>
<dbReference type="NCBIfam" id="TIGR00329">
    <property type="entry name" value="gcp_kae1"/>
    <property type="match status" value="1"/>
</dbReference>
<dbReference type="NCBIfam" id="TIGR03723">
    <property type="entry name" value="T6A_TsaD_YgjD"/>
    <property type="match status" value="1"/>
</dbReference>
<dbReference type="PANTHER" id="PTHR11735">
    <property type="entry name" value="TRNA N6-ADENOSINE THREONYLCARBAMOYLTRANSFERASE"/>
    <property type="match status" value="1"/>
</dbReference>
<dbReference type="PANTHER" id="PTHR11735:SF6">
    <property type="entry name" value="TRNA N6-ADENOSINE THREONYLCARBAMOYLTRANSFERASE, MITOCHONDRIAL"/>
    <property type="match status" value="1"/>
</dbReference>
<dbReference type="Pfam" id="PF00814">
    <property type="entry name" value="TsaD"/>
    <property type="match status" value="1"/>
</dbReference>
<dbReference type="PRINTS" id="PR00789">
    <property type="entry name" value="OSIALOPTASE"/>
</dbReference>
<dbReference type="SUPFAM" id="SSF53067">
    <property type="entry name" value="Actin-like ATPase domain"/>
    <property type="match status" value="2"/>
</dbReference>
<dbReference type="PROSITE" id="PS01016">
    <property type="entry name" value="GLYCOPROTEASE"/>
    <property type="match status" value="1"/>
</dbReference>
<accession>Q3JF13</accession>
<feature type="chain" id="PRO_0000303455" description="tRNA N6-adenosine threonylcarbamoyltransferase">
    <location>
        <begin position="1"/>
        <end position="335"/>
    </location>
</feature>
<feature type="binding site" evidence="1">
    <location>
        <position position="111"/>
    </location>
    <ligand>
        <name>Fe cation</name>
        <dbReference type="ChEBI" id="CHEBI:24875"/>
    </ligand>
</feature>
<feature type="binding site" evidence="1">
    <location>
        <position position="115"/>
    </location>
    <ligand>
        <name>Fe cation</name>
        <dbReference type="ChEBI" id="CHEBI:24875"/>
    </ligand>
</feature>
<feature type="binding site" evidence="1">
    <location>
        <begin position="134"/>
        <end position="138"/>
    </location>
    <ligand>
        <name>substrate</name>
    </ligand>
</feature>
<feature type="binding site" evidence="1">
    <location>
        <position position="167"/>
    </location>
    <ligand>
        <name>substrate</name>
    </ligand>
</feature>
<feature type="binding site" evidence="1">
    <location>
        <position position="180"/>
    </location>
    <ligand>
        <name>substrate</name>
    </ligand>
</feature>
<feature type="binding site" evidence="1">
    <location>
        <position position="270"/>
    </location>
    <ligand>
        <name>substrate</name>
    </ligand>
</feature>
<feature type="binding site" evidence="1">
    <location>
        <position position="298"/>
    </location>
    <ligand>
        <name>Fe cation</name>
        <dbReference type="ChEBI" id="CHEBI:24875"/>
    </ligand>
</feature>
<name>TSAD_NITOC</name>
<protein>
    <recommendedName>
        <fullName evidence="1">tRNA N6-adenosine threonylcarbamoyltransferase</fullName>
        <ecNumber evidence="1">2.3.1.234</ecNumber>
    </recommendedName>
    <alternativeName>
        <fullName evidence="1">N6-L-threonylcarbamoyladenine synthase</fullName>
        <shortName evidence="1">t(6)A synthase</shortName>
    </alternativeName>
    <alternativeName>
        <fullName evidence="1">t(6)A37 threonylcarbamoyladenosine biosynthesis protein TsaD</fullName>
    </alternativeName>
    <alternativeName>
        <fullName evidence="1">tRNA threonylcarbamoyladenosine biosynthesis protein TsaD</fullName>
    </alternativeName>
</protein>
<evidence type="ECO:0000255" key="1">
    <source>
        <dbReference type="HAMAP-Rule" id="MF_01445"/>
    </source>
</evidence>
<sequence>MRVLGIETSCDETGVAVFDSKQGLLADILHSQAKLHAGYGGVVPELASRDHIRKLLPLLRKVLNQAGLNKEDIDGVAYTGGPGLIGALLVGAAVGRSLAWALGKPAIAVHHMEGHLLSPLLEPNPPGFPFCALLISGGHTMLVTVNRIGAYRILGESLDDAVGEAFDKTAKLLQLGYPGGPALAKLAEQGNPDRFYFPRPMLDRPGLNFSFSGLKTYALNTLHKNGSEAAADIARAFQDAVVDTLTVKCRRALQQTGLNRLVVAGGVSANQALRQRLKAMGTQENVQVYYPRLAFCTDNGAMIAFAGCQRLLAGEQTSSGFSVRARWPLDTLPEI</sequence>